<comment type="function">
    <text evidence="1 2">Catalyzes the hydrolysis of futalosine (FL) to dehypoxanthine futalosine (DHFL) and hypoxanthine, a step in the biosynthesis of menaquinone (MK, vitamin K2). Cannot directly use aminodeoxyfutalosine (AFL) as a substrate.</text>
</comment>
<comment type="catalytic activity">
    <reaction evidence="1 2">
        <text>futalosine + H2O = dehypoxanthine futalosine + hypoxanthine</text>
        <dbReference type="Rhea" id="RHEA:25904"/>
        <dbReference type="ChEBI" id="CHEBI:15377"/>
        <dbReference type="ChEBI" id="CHEBI:17368"/>
        <dbReference type="ChEBI" id="CHEBI:58863"/>
        <dbReference type="ChEBI" id="CHEBI:58864"/>
        <dbReference type="EC" id="3.2.2.26"/>
    </reaction>
</comment>
<comment type="pathway">
    <text evidence="1 2">Quinol/quinone metabolism; menaquinone biosynthesis.</text>
</comment>
<comment type="similarity">
    <text evidence="1">Belongs to the PNP/UDP phosphorylase family. Futalosine hydrolase subfamily.</text>
</comment>
<proteinExistence type="evidence at protein level"/>
<protein>
    <recommendedName>
        <fullName evidence="1">Futalosine hydrolase</fullName>
        <shortName evidence="1">FL hydrolase</shortName>
        <ecNumber evidence="1">3.2.2.26</ecNumber>
    </recommendedName>
    <alternativeName>
        <fullName evidence="1">Futalosine nucleosidase</fullName>
    </alternativeName>
    <alternativeName>
        <fullName evidence="1">Menaquinone biosynthetic enzyme MqnB</fullName>
    </alternativeName>
</protein>
<gene>
    <name evidence="1" type="primary">mqnB</name>
    <name type="ordered locus">Acel_0106</name>
</gene>
<sequence>MSVKRLIITAVAAEADAVASGLDGAQPHPQGSANVRHTATADILVAGVGSAAAAAATAAALARRHYSLVICTGIAGGIGIAGIGDIVVADAVHPADLGAMSPDGFIPLEHLGIATTANAIDPPVVEELTGPLRYAGLAPVIGGILTVNTVTGTDAHADDLRRRYPGAVAEAMEGYGVAVAATRAGVRYGELRVVSNRVGRRDRRAWDIPGALRRLEHAFAALGAAWCNDGSGQAAAREIDGGCP</sequence>
<evidence type="ECO:0000255" key="1">
    <source>
        <dbReference type="HAMAP-Rule" id="MF_00991"/>
    </source>
</evidence>
<evidence type="ECO:0000269" key="2">
    <source>
    </source>
</evidence>
<keyword id="KW-0378">Hydrolase</keyword>
<keyword id="KW-0474">Menaquinone biosynthesis</keyword>
<keyword id="KW-1185">Reference proteome</keyword>
<dbReference type="EC" id="3.2.2.26" evidence="1"/>
<dbReference type="EMBL" id="CP000481">
    <property type="protein sequence ID" value="ABK51882.1"/>
    <property type="molecule type" value="Genomic_DNA"/>
</dbReference>
<dbReference type="RefSeq" id="WP_011718946.1">
    <property type="nucleotide sequence ID" value="NC_008578.1"/>
</dbReference>
<dbReference type="SMR" id="A0LR22"/>
<dbReference type="STRING" id="351607.Acel_0106"/>
<dbReference type="KEGG" id="ace:Acel_0106"/>
<dbReference type="eggNOG" id="COG0775">
    <property type="taxonomic scope" value="Bacteria"/>
</dbReference>
<dbReference type="HOGENOM" id="CLU_031248_3_0_11"/>
<dbReference type="InParanoid" id="A0LR22"/>
<dbReference type="OrthoDB" id="9788270at2"/>
<dbReference type="UniPathway" id="UPA00079"/>
<dbReference type="Proteomes" id="UP000008221">
    <property type="component" value="Chromosome"/>
</dbReference>
<dbReference type="GO" id="GO:0005829">
    <property type="term" value="C:cytosol"/>
    <property type="evidence" value="ECO:0007669"/>
    <property type="project" value="TreeGrafter"/>
</dbReference>
<dbReference type="GO" id="GO:0008782">
    <property type="term" value="F:adenosylhomocysteine nucleosidase activity"/>
    <property type="evidence" value="ECO:0007669"/>
    <property type="project" value="TreeGrafter"/>
</dbReference>
<dbReference type="GO" id="GO:0008930">
    <property type="term" value="F:methylthioadenosine nucleosidase activity"/>
    <property type="evidence" value="ECO:0007669"/>
    <property type="project" value="TreeGrafter"/>
</dbReference>
<dbReference type="GO" id="GO:0019284">
    <property type="term" value="P:L-methionine salvage from S-adenosylmethionine"/>
    <property type="evidence" value="ECO:0007669"/>
    <property type="project" value="TreeGrafter"/>
</dbReference>
<dbReference type="GO" id="GO:0009234">
    <property type="term" value="P:menaquinone biosynthetic process"/>
    <property type="evidence" value="ECO:0007669"/>
    <property type="project" value="UniProtKB-UniRule"/>
</dbReference>
<dbReference type="GO" id="GO:0009116">
    <property type="term" value="P:nucleoside metabolic process"/>
    <property type="evidence" value="ECO:0007669"/>
    <property type="project" value="InterPro"/>
</dbReference>
<dbReference type="CDD" id="cd17766">
    <property type="entry name" value="futalosine_nucleosidase_MqnB"/>
    <property type="match status" value="1"/>
</dbReference>
<dbReference type="Gene3D" id="3.40.50.1580">
    <property type="entry name" value="Nucleoside phosphorylase domain"/>
    <property type="match status" value="1"/>
</dbReference>
<dbReference type="HAMAP" id="MF_00991">
    <property type="entry name" value="MqnB"/>
    <property type="match status" value="1"/>
</dbReference>
<dbReference type="InterPro" id="IPR019963">
    <property type="entry name" value="FL_hydrolase_MqnB"/>
</dbReference>
<dbReference type="InterPro" id="IPR000845">
    <property type="entry name" value="Nucleoside_phosphorylase_d"/>
</dbReference>
<dbReference type="InterPro" id="IPR035994">
    <property type="entry name" value="Nucleoside_phosphorylase_sf"/>
</dbReference>
<dbReference type="NCBIfam" id="TIGR03664">
    <property type="entry name" value="fut_nucase"/>
    <property type="match status" value="1"/>
</dbReference>
<dbReference type="NCBIfam" id="NF006087">
    <property type="entry name" value="PRK08236.1"/>
    <property type="match status" value="1"/>
</dbReference>
<dbReference type="PANTHER" id="PTHR46832">
    <property type="entry name" value="5'-METHYLTHIOADENOSINE/S-ADENOSYLHOMOCYSTEINE NUCLEOSIDASE"/>
    <property type="match status" value="1"/>
</dbReference>
<dbReference type="PANTHER" id="PTHR46832:SF2">
    <property type="entry name" value="FUTALOSINE HYDROLASE"/>
    <property type="match status" value="1"/>
</dbReference>
<dbReference type="Pfam" id="PF01048">
    <property type="entry name" value="PNP_UDP_1"/>
    <property type="match status" value="1"/>
</dbReference>
<dbReference type="SUPFAM" id="SSF53167">
    <property type="entry name" value="Purine and uridine phosphorylases"/>
    <property type="match status" value="1"/>
</dbReference>
<accession>A0LR22</accession>
<reference key="1">
    <citation type="journal article" date="2009" name="Genome Res.">
        <title>Complete genome of the cellulolytic thermophile Acidothermus cellulolyticus 11B provides insights into its ecophysiological and evolutionary adaptations.</title>
        <authorList>
            <person name="Barabote R.D."/>
            <person name="Xie G."/>
            <person name="Leu D.H."/>
            <person name="Normand P."/>
            <person name="Necsulea A."/>
            <person name="Daubin V."/>
            <person name="Medigue C."/>
            <person name="Adney W.S."/>
            <person name="Xu X.C."/>
            <person name="Lapidus A."/>
            <person name="Parales R.E."/>
            <person name="Detter C."/>
            <person name="Pujic P."/>
            <person name="Bruce D."/>
            <person name="Lavire C."/>
            <person name="Challacombe J.F."/>
            <person name="Brettin T.S."/>
            <person name="Berry A.M."/>
        </authorList>
    </citation>
    <scope>NUCLEOTIDE SEQUENCE [LARGE SCALE GENOMIC DNA]</scope>
    <source>
        <strain>ATCC 43068 / DSM 8971 / 11B</strain>
    </source>
</reference>
<reference key="2">
    <citation type="journal article" date="2011" name="Antimicrob. Agents Chemother.">
        <title>Diversity of the early step of the futalosine pathway.</title>
        <authorList>
            <person name="Arakawa C."/>
            <person name="Kuratsu M."/>
            <person name="Furihata K."/>
            <person name="Hiratsuka T."/>
            <person name="Itoh N."/>
            <person name="Seto H."/>
            <person name="Dairi T."/>
        </authorList>
    </citation>
    <scope>FUNCTION</scope>
    <scope>CATALYTIC ACTIVITY</scope>
    <scope>SUBSTRATE SPECIFICITY</scope>
    <scope>PATHWAY</scope>
</reference>
<name>MQNB_ACIC1</name>
<feature type="chain" id="PRO_0000425137" description="Futalosine hydrolase">
    <location>
        <begin position="1"/>
        <end position="244"/>
    </location>
</feature>
<organism>
    <name type="scientific">Acidothermus cellulolyticus (strain ATCC 43068 / DSM 8971 / 11B)</name>
    <dbReference type="NCBI Taxonomy" id="351607"/>
    <lineage>
        <taxon>Bacteria</taxon>
        <taxon>Bacillati</taxon>
        <taxon>Actinomycetota</taxon>
        <taxon>Actinomycetes</taxon>
        <taxon>Acidothermales</taxon>
        <taxon>Acidothermaceae</taxon>
        <taxon>Acidothermus</taxon>
    </lineage>
</organism>